<feature type="chain" id="PRO_0000070955" description="Co-chaperone protein HscB homolog">
    <location>
        <begin position="1"/>
        <end position="177"/>
    </location>
</feature>
<feature type="domain" description="J" evidence="1">
    <location>
        <begin position="8"/>
        <end position="80"/>
    </location>
</feature>
<sequence>MSIDLQQDFFALFGLPRRFRVDEAALEMAYHDLQGQVHPDRFAHLPDVEKRLSMQWATRVNEGFRTLRKPLPRAQYMLELAGVDAGLHTNTAMSSAFLMEQMEWREAVEEARAAGEGHELTQLHHRLRHHAREVFDELERTIDERHDFAAAAEIVRRLMFMEKIQHEIDDALEALET</sequence>
<reference key="1">
    <citation type="journal article" date="2005" name="Arch. Microbiol.">
        <title>The genome sequence of an anaerobic aromatic-degrading denitrifying bacterium, strain EbN1.</title>
        <authorList>
            <person name="Rabus R."/>
            <person name="Kube M."/>
            <person name="Heider J."/>
            <person name="Beck A."/>
            <person name="Heitmann K."/>
            <person name="Widdel F."/>
            <person name="Reinhardt R."/>
        </authorList>
    </citation>
    <scope>NUCLEOTIDE SEQUENCE [LARGE SCALE GENOMIC DNA]</scope>
    <source>
        <strain>DSM 19018 / LMG 30748 / EbN1</strain>
    </source>
</reference>
<proteinExistence type="inferred from homology"/>
<organism>
    <name type="scientific">Aromatoleum aromaticum (strain DSM 19018 / LMG 30748 / EbN1)</name>
    <name type="common">Azoarcus sp. (strain EbN1)</name>
    <dbReference type="NCBI Taxonomy" id="76114"/>
    <lineage>
        <taxon>Bacteria</taxon>
        <taxon>Pseudomonadati</taxon>
        <taxon>Pseudomonadota</taxon>
        <taxon>Betaproteobacteria</taxon>
        <taxon>Rhodocyclales</taxon>
        <taxon>Rhodocyclaceae</taxon>
        <taxon>Aromatoleum</taxon>
    </lineage>
</organism>
<keyword id="KW-0143">Chaperone</keyword>
<keyword id="KW-1185">Reference proteome</keyword>
<name>HSCB_AROAE</name>
<protein>
    <recommendedName>
        <fullName evidence="1">Co-chaperone protein HscB homolog</fullName>
    </recommendedName>
</protein>
<accession>Q5NYT0</accession>
<dbReference type="EMBL" id="CR555306">
    <property type="protein sequence ID" value="CAI09784.1"/>
    <property type="molecule type" value="Genomic_DNA"/>
</dbReference>
<dbReference type="RefSeq" id="WP_011239437.1">
    <property type="nucleotide sequence ID" value="NC_006513.1"/>
</dbReference>
<dbReference type="SMR" id="Q5NYT0"/>
<dbReference type="STRING" id="76114.ebA6397"/>
<dbReference type="KEGG" id="eba:ebA6397"/>
<dbReference type="eggNOG" id="COG1076">
    <property type="taxonomic scope" value="Bacteria"/>
</dbReference>
<dbReference type="HOGENOM" id="CLU_068529_2_1_4"/>
<dbReference type="OrthoDB" id="287587at2"/>
<dbReference type="Proteomes" id="UP000006552">
    <property type="component" value="Chromosome"/>
</dbReference>
<dbReference type="GO" id="GO:0001671">
    <property type="term" value="F:ATPase activator activity"/>
    <property type="evidence" value="ECO:0007669"/>
    <property type="project" value="InterPro"/>
</dbReference>
<dbReference type="GO" id="GO:0051087">
    <property type="term" value="F:protein-folding chaperone binding"/>
    <property type="evidence" value="ECO:0007669"/>
    <property type="project" value="InterPro"/>
</dbReference>
<dbReference type="GO" id="GO:0044571">
    <property type="term" value="P:[2Fe-2S] cluster assembly"/>
    <property type="evidence" value="ECO:0007669"/>
    <property type="project" value="InterPro"/>
</dbReference>
<dbReference type="GO" id="GO:0051259">
    <property type="term" value="P:protein complex oligomerization"/>
    <property type="evidence" value="ECO:0007669"/>
    <property type="project" value="InterPro"/>
</dbReference>
<dbReference type="GO" id="GO:0006457">
    <property type="term" value="P:protein folding"/>
    <property type="evidence" value="ECO:0007669"/>
    <property type="project" value="UniProtKB-UniRule"/>
</dbReference>
<dbReference type="CDD" id="cd06257">
    <property type="entry name" value="DnaJ"/>
    <property type="match status" value="1"/>
</dbReference>
<dbReference type="Gene3D" id="1.10.287.110">
    <property type="entry name" value="DnaJ domain"/>
    <property type="match status" value="1"/>
</dbReference>
<dbReference type="Gene3D" id="1.20.1280.20">
    <property type="entry name" value="HscB, C-terminal domain"/>
    <property type="match status" value="1"/>
</dbReference>
<dbReference type="HAMAP" id="MF_00682">
    <property type="entry name" value="HscB"/>
    <property type="match status" value="1"/>
</dbReference>
<dbReference type="InterPro" id="IPR001623">
    <property type="entry name" value="DnaJ_domain"/>
</dbReference>
<dbReference type="InterPro" id="IPR004640">
    <property type="entry name" value="HscB"/>
</dbReference>
<dbReference type="InterPro" id="IPR036386">
    <property type="entry name" value="HscB_C_sf"/>
</dbReference>
<dbReference type="InterPro" id="IPR009073">
    <property type="entry name" value="HscB_oligo_C"/>
</dbReference>
<dbReference type="InterPro" id="IPR036869">
    <property type="entry name" value="J_dom_sf"/>
</dbReference>
<dbReference type="NCBIfam" id="TIGR00714">
    <property type="entry name" value="hscB"/>
    <property type="match status" value="1"/>
</dbReference>
<dbReference type="NCBIfam" id="NF002935">
    <property type="entry name" value="PRK03578.1"/>
    <property type="match status" value="1"/>
</dbReference>
<dbReference type="PANTHER" id="PTHR14021">
    <property type="entry name" value="IRON-SULFUR CLUSTER CO-CHAPERONE PROTEIN HSCB"/>
    <property type="match status" value="1"/>
</dbReference>
<dbReference type="PANTHER" id="PTHR14021:SF15">
    <property type="entry name" value="IRON-SULFUR CLUSTER CO-CHAPERONE PROTEIN HSCB"/>
    <property type="match status" value="1"/>
</dbReference>
<dbReference type="Pfam" id="PF07743">
    <property type="entry name" value="HSCB_C"/>
    <property type="match status" value="1"/>
</dbReference>
<dbReference type="SUPFAM" id="SSF46565">
    <property type="entry name" value="Chaperone J-domain"/>
    <property type="match status" value="1"/>
</dbReference>
<dbReference type="SUPFAM" id="SSF47144">
    <property type="entry name" value="HSC20 (HSCB), C-terminal oligomerisation domain"/>
    <property type="match status" value="1"/>
</dbReference>
<dbReference type="PROSITE" id="PS50076">
    <property type="entry name" value="DNAJ_2"/>
    <property type="match status" value="1"/>
</dbReference>
<comment type="function">
    <text evidence="1">Co-chaperone involved in the maturation of iron-sulfur cluster-containing proteins. Seems to help targeting proteins to be folded toward HscA.</text>
</comment>
<comment type="subunit">
    <text evidence="1">Interacts with HscA and stimulates its ATPase activity.</text>
</comment>
<comment type="similarity">
    <text evidence="1">Belongs to the HscB family.</text>
</comment>
<evidence type="ECO:0000255" key="1">
    <source>
        <dbReference type="HAMAP-Rule" id="MF_00682"/>
    </source>
</evidence>
<gene>
    <name evidence="1" type="primary">hscB</name>
    <name type="ordered locus">AZOSEA36590</name>
    <name type="ORF">ebA6397</name>
</gene>